<comment type="catalytic activity">
    <reaction evidence="1">
        <text>tRNA(Phe) + L-phenylalanine + ATP = L-phenylalanyl-tRNA(Phe) + AMP + diphosphate + H(+)</text>
        <dbReference type="Rhea" id="RHEA:19413"/>
        <dbReference type="Rhea" id="RHEA-COMP:9668"/>
        <dbReference type="Rhea" id="RHEA-COMP:9699"/>
        <dbReference type="ChEBI" id="CHEBI:15378"/>
        <dbReference type="ChEBI" id="CHEBI:30616"/>
        <dbReference type="ChEBI" id="CHEBI:33019"/>
        <dbReference type="ChEBI" id="CHEBI:58095"/>
        <dbReference type="ChEBI" id="CHEBI:78442"/>
        <dbReference type="ChEBI" id="CHEBI:78531"/>
        <dbReference type="ChEBI" id="CHEBI:456215"/>
        <dbReference type="EC" id="6.1.1.20"/>
    </reaction>
</comment>
<comment type="cofactor">
    <cofactor evidence="1">
        <name>Mg(2+)</name>
        <dbReference type="ChEBI" id="CHEBI:18420"/>
    </cofactor>
    <text evidence="1">Binds 2 magnesium ions per tetramer.</text>
</comment>
<comment type="subunit">
    <text evidence="1">Tetramer of two alpha and two beta subunits.</text>
</comment>
<comment type="subcellular location">
    <subcellularLocation>
        <location evidence="1">Cytoplasm</location>
    </subcellularLocation>
</comment>
<comment type="similarity">
    <text evidence="1">Belongs to the class-II aminoacyl-tRNA synthetase family. Phe-tRNA synthetase alpha subunit type 1 subfamily.</text>
</comment>
<name>SYFA_XYLFT</name>
<feature type="chain" id="PRO_0000126801" description="Phenylalanine--tRNA ligase alpha subunit">
    <location>
        <begin position="1"/>
        <end position="333"/>
    </location>
</feature>
<feature type="binding site" evidence="1">
    <location>
        <position position="254"/>
    </location>
    <ligand>
        <name>Mg(2+)</name>
        <dbReference type="ChEBI" id="CHEBI:18420"/>
        <note>shared with beta subunit</note>
    </ligand>
</feature>
<organism>
    <name type="scientific">Xylella fastidiosa (strain Temecula1 / ATCC 700964)</name>
    <dbReference type="NCBI Taxonomy" id="183190"/>
    <lineage>
        <taxon>Bacteria</taxon>
        <taxon>Pseudomonadati</taxon>
        <taxon>Pseudomonadota</taxon>
        <taxon>Gammaproteobacteria</taxon>
        <taxon>Lysobacterales</taxon>
        <taxon>Lysobacteraceae</taxon>
        <taxon>Xylella</taxon>
    </lineage>
</organism>
<keyword id="KW-0030">Aminoacyl-tRNA synthetase</keyword>
<keyword id="KW-0067">ATP-binding</keyword>
<keyword id="KW-0963">Cytoplasm</keyword>
<keyword id="KW-0436">Ligase</keyword>
<keyword id="KW-0460">Magnesium</keyword>
<keyword id="KW-0479">Metal-binding</keyword>
<keyword id="KW-0547">Nucleotide-binding</keyword>
<keyword id="KW-0648">Protein biosynthesis</keyword>
<keyword id="KW-1185">Reference proteome</keyword>
<sequence length="333" mass="37930">MVINDIESLTAQALAEVAAAQNLDHLEFLRVALLGKNGSITLQLKQLGKLPVEQRKAIGEKLNRVRDLISDALMDRKAALESAALSKRLIDERVDVTLPGRRGERAGLHPVTRTLERITEIFARLGYELVEGPEIEDDWHNFEALNFPLHHPARAMHDTFYFGDGRLLRTHTSGVQVRYMSDHRPPLRMIAAGKVYRSDSDQTHSPMFHQIEGLLLDKHATFVDLKGTLSEFLRAFFERDFEVRFRPSYFPFVEPGAEVDIAWQQSDSSVRWLEVLGCGMVHPNVLKNVGIDSECYTGFAFGLGVERFAMLRYGVDDLRAFFENDVRFLRQFS</sequence>
<accession>Q87AB5</accession>
<dbReference type="EC" id="6.1.1.20" evidence="1"/>
<dbReference type="EMBL" id="AE009442">
    <property type="protein sequence ID" value="AAO29742.1"/>
    <property type="molecule type" value="Genomic_DNA"/>
</dbReference>
<dbReference type="SMR" id="Q87AB5"/>
<dbReference type="KEGG" id="xft:PD_1912"/>
<dbReference type="HOGENOM" id="CLU_025086_0_1_6"/>
<dbReference type="Proteomes" id="UP000002516">
    <property type="component" value="Chromosome"/>
</dbReference>
<dbReference type="GO" id="GO:0005737">
    <property type="term" value="C:cytoplasm"/>
    <property type="evidence" value="ECO:0007669"/>
    <property type="project" value="UniProtKB-SubCell"/>
</dbReference>
<dbReference type="GO" id="GO:0005524">
    <property type="term" value="F:ATP binding"/>
    <property type="evidence" value="ECO:0007669"/>
    <property type="project" value="UniProtKB-UniRule"/>
</dbReference>
<dbReference type="GO" id="GO:0000287">
    <property type="term" value="F:magnesium ion binding"/>
    <property type="evidence" value="ECO:0007669"/>
    <property type="project" value="UniProtKB-UniRule"/>
</dbReference>
<dbReference type="GO" id="GO:0004826">
    <property type="term" value="F:phenylalanine-tRNA ligase activity"/>
    <property type="evidence" value="ECO:0007669"/>
    <property type="project" value="UniProtKB-UniRule"/>
</dbReference>
<dbReference type="GO" id="GO:0000049">
    <property type="term" value="F:tRNA binding"/>
    <property type="evidence" value="ECO:0007669"/>
    <property type="project" value="InterPro"/>
</dbReference>
<dbReference type="GO" id="GO:0006432">
    <property type="term" value="P:phenylalanyl-tRNA aminoacylation"/>
    <property type="evidence" value="ECO:0007669"/>
    <property type="project" value="UniProtKB-UniRule"/>
</dbReference>
<dbReference type="CDD" id="cd00496">
    <property type="entry name" value="PheRS_alpha_core"/>
    <property type="match status" value="1"/>
</dbReference>
<dbReference type="FunFam" id="3.30.930.10:FF:000003">
    <property type="entry name" value="Phenylalanine--tRNA ligase alpha subunit"/>
    <property type="match status" value="1"/>
</dbReference>
<dbReference type="Gene3D" id="3.30.930.10">
    <property type="entry name" value="Bira Bifunctional Protein, Domain 2"/>
    <property type="match status" value="1"/>
</dbReference>
<dbReference type="HAMAP" id="MF_00281">
    <property type="entry name" value="Phe_tRNA_synth_alpha1"/>
    <property type="match status" value="1"/>
</dbReference>
<dbReference type="InterPro" id="IPR006195">
    <property type="entry name" value="aa-tRNA-synth_II"/>
</dbReference>
<dbReference type="InterPro" id="IPR045864">
    <property type="entry name" value="aa-tRNA-synth_II/BPL/LPL"/>
</dbReference>
<dbReference type="InterPro" id="IPR004529">
    <property type="entry name" value="Phe-tRNA-synth_IIc_asu"/>
</dbReference>
<dbReference type="InterPro" id="IPR004188">
    <property type="entry name" value="Phe-tRNA_ligase_II_N"/>
</dbReference>
<dbReference type="InterPro" id="IPR022911">
    <property type="entry name" value="Phe_tRNA_ligase_alpha1_bac"/>
</dbReference>
<dbReference type="InterPro" id="IPR002319">
    <property type="entry name" value="Phenylalanyl-tRNA_Synthase"/>
</dbReference>
<dbReference type="InterPro" id="IPR010978">
    <property type="entry name" value="tRNA-bd_arm"/>
</dbReference>
<dbReference type="NCBIfam" id="TIGR00468">
    <property type="entry name" value="pheS"/>
    <property type="match status" value="1"/>
</dbReference>
<dbReference type="PANTHER" id="PTHR11538:SF41">
    <property type="entry name" value="PHENYLALANINE--TRNA LIGASE, MITOCHONDRIAL"/>
    <property type="match status" value="1"/>
</dbReference>
<dbReference type="PANTHER" id="PTHR11538">
    <property type="entry name" value="PHENYLALANYL-TRNA SYNTHETASE"/>
    <property type="match status" value="1"/>
</dbReference>
<dbReference type="Pfam" id="PF02912">
    <property type="entry name" value="Phe_tRNA-synt_N"/>
    <property type="match status" value="1"/>
</dbReference>
<dbReference type="Pfam" id="PF01409">
    <property type="entry name" value="tRNA-synt_2d"/>
    <property type="match status" value="1"/>
</dbReference>
<dbReference type="SUPFAM" id="SSF55681">
    <property type="entry name" value="Class II aaRS and biotin synthetases"/>
    <property type="match status" value="1"/>
</dbReference>
<dbReference type="SUPFAM" id="SSF46589">
    <property type="entry name" value="tRNA-binding arm"/>
    <property type="match status" value="1"/>
</dbReference>
<dbReference type="PROSITE" id="PS50862">
    <property type="entry name" value="AA_TRNA_LIGASE_II"/>
    <property type="match status" value="1"/>
</dbReference>
<reference key="1">
    <citation type="journal article" date="2003" name="J. Bacteriol.">
        <title>Comparative analyses of the complete genome sequences of Pierce's disease and citrus variegated chlorosis strains of Xylella fastidiosa.</title>
        <authorList>
            <person name="Van Sluys M.A."/>
            <person name="de Oliveira M.C."/>
            <person name="Monteiro-Vitorello C.B."/>
            <person name="Miyaki C.Y."/>
            <person name="Furlan L.R."/>
            <person name="Camargo L.E.A."/>
            <person name="da Silva A.C.R."/>
            <person name="Moon D.H."/>
            <person name="Takita M.A."/>
            <person name="Lemos E.G.M."/>
            <person name="Machado M.A."/>
            <person name="Ferro M.I.T."/>
            <person name="da Silva F.R."/>
            <person name="Goldman M.H.S."/>
            <person name="Goldman G.H."/>
            <person name="Lemos M.V.F."/>
            <person name="El-Dorry H."/>
            <person name="Tsai S.M."/>
            <person name="Carrer H."/>
            <person name="Carraro D.M."/>
            <person name="de Oliveira R.C."/>
            <person name="Nunes L.R."/>
            <person name="Siqueira W.J."/>
            <person name="Coutinho L.L."/>
            <person name="Kimura E.T."/>
            <person name="Ferro E.S."/>
            <person name="Harakava R."/>
            <person name="Kuramae E.E."/>
            <person name="Marino C.L."/>
            <person name="Giglioti E."/>
            <person name="Abreu I.L."/>
            <person name="Alves L.M.C."/>
            <person name="do Amaral A.M."/>
            <person name="Baia G.S."/>
            <person name="Blanco S.R."/>
            <person name="Brito M.S."/>
            <person name="Cannavan F.S."/>
            <person name="Celestino A.V."/>
            <person name="da Cunha A.F."/>
            <person name="Fenille R.C."/>
            <person name="Ferro J.A."/>
            <person name="Formighieri E.F."/>
            <person name="Kishi L.T."/>
            <person name="Leoni S.G."/>
            <person name="Oliveira A.R."/>
            <person name="Rosa V.E. Jr."/>
            <person name="Sassaki F.T."/>
            <person name="Sena J.A.D."/>
            <person name="de Souza A.A."/>
            <person name="Truffi D."/>
            <person name="Tsukumo F."/>
            <person name="Yanai G.M."/>
            <person name="Zaros L.G."/>
            <person name="Civerolo E.L."/>
            <person name="Simpson A.J.G."/>
            <person name="Almeida N.F. Jr."/>
            <person name="Setubal J.C."/>
            <person name="Kitajima J.P."/>
        </authorList>
    </citation>
    <scope>NUCLEOTIDE SEQUENCE [LARGE SCALE GENOMIC DNA]</scope>
    <source>
        <strain>Temecula1 / ATCC 700964</strain>
    </source>
</reference>
<evidence type="ECO:0000255" key="1">
    <source>
        <dbReference type="HAMAP-Rule" id="MF_00281"/>
    </source>
</evidence>
<protein>
    <recommendedName>
        <fullName evidence="1">Phenylalanine--tRNA ligase alpha subunit</fullName>
        <ecNumber evidence="1">6.1.1.20</ecNumber>
    </recommendedName>
    <alternativeName>
        <fullName evidence="1">Phenylalanyl-tRNA synthetase alpha subunit</fullName>
        <shortName evidence="1">PheRS</shortName>
    </alternativeName>
</protein>
<gene>
    <name evidence="1" type="primary">pheS</name>
    <name type="ordered locus">PD_1912</name>
</gene>
<proteinExistence type="inferred from homology"/>